<protein>
    <recommendedName>
        <fullName>U3 small nucleolar RNA-interacting protein 2</fullName>
    </recommendedName>
    <alternativeName>
        <fullName>RRP9 homolog</fullName>
    </alternativeName>
    <alternativeName>
        <fullName evidence="10">U3 small nucleolar ribonucleoprotein-associated 55 kDa protein</fullName>
        <shortName evidence="10">U3 snoRNP-associated 55 kDa protein</shortName>
        <shortName evidence="10">U3-55K</shortName>
    </alternativeName>
</protein>
<feature type="chain" id="PRO_0000051313" description="U3 small nucleolar RNA-interacting protein 2">
    <location>
        <begin position="1"/>
        <end position="475"/>
    </location>
</feature>
<feature type="repeat" description="WD 1">
    <location>
        <begin position="144"/>
        <end position="183"/>
    </location>
</feature>
<feature type="repeat" description="WD 2">
    <location>
        <begin position="197"/>
        <end position="236"/>
    </location>
</feature>
<feature type="repeat" description="WD 3">
    <location>
        <begin position="239"/>
        <end position="278"/>
    </location>
</feature>
<feature type="repeat" description="WD 4">
    <location>
        <begin position="281"/>
        <end position="320"/>
    </location>
</feature>
<feature type="repeat" description="WD 5">
    <location>
        <begin position="322"/>
        <end position="360"/>
    </location>
</feature>
<feature type="repeat" description="WD 6">
    <location>
        <begin position="374"/>
        <end position="413"/>
    </location>
</feature>
<feature type="repeat" description="WD 7">
    <location>
        <begin position="419"/>
        <end position="460"/>
    </location>
</feature>
<feature type="region of interest" description="Disordered" evidence="2">
    <location>
        <begin position="1"/>
        <end position="75"/>
    </location>
</feature>
<feature type="short sequence motif" description="Nuclear localization signal" evidence="1">
    <location>
        <begin position="8"/>
        <end position="40"/>
    </location>
</feature>
<feature type="compositionally biased region" description="Acidic residues" evidence="2">
    <location>
        <begin position="65"/>
        <end position="74"/>
    </location>
</feature>
<feature type="modified residue" description="Omega-N-methylarginine" evidence="19">
    <location>
        <position position="10"/>
    </location>
</feature>
<feature type="modified residue" description="N6-acetyllysine" evidence="7">
    <location>
        <position position="12"/>
    </location>
</feature>
<feature type="modified residue" description="N6-acetyllysine" evidence="7">
    <location>
        <position position="25"/>
    </location>
</feature>
<feature type="modified residue" description="Phosphoserine" evidence="16 17 18">
    <location>
        <position position="50"/>
    </location>
</feature>
<feature type="modified residue" description="Phosphoserine" evidence="16 17 18">
    <location>
        <position position="51"/>
    </location>
</feature>
<feature type="modified residue" description="Phosphoserine" evidence="16 17 18">
    <location>
        <position position="53"/>
    </location>
</feature>
<feature type="modified residue" description="Phosphoserine" evidence="16">
    <location>
        <position position="57"/>
    </location>
</feature>
<feature type="cross-link" description="Glycyl lysine isopeptide (Lys-Gly) (interchain with G-Cter in SUMO2)" evidence="20">
    <location>
        <position position="113"/>
    </location>
</feature>
<feature type="sequence variant" id="VAR_035887" description="In a breast cancer sample; somatic mutation; dbSNP:rs1333637065." evidence="6">
    <original>R</original>
    <variation>G</variation>
    <location>
        <position position="8"/>
    </location>
</feature>
<feature type="sequence variant" id="VAR_035888" description="In a breast cancer sample; somatic mutation." evidence="6">
    <original>A</original>
    <variation>E</variation>
    <location>
        <position position="342"/>
    </location>
</feature>
<feature type="mutagenesis site" description="Mimics acetylation, leading to impaired rRNA processing; when associated with Q-25." evidence="7">
    <original>K</original>
    <variation>Q</variation>
    <location>
        <position position="12"/>
    </location>
</feature>
<feature type="mutagenesis site" description="Impaired acetylation, leading to promote rRNA processing; when associated with R-25." evidence="7">
    <original>K</original>
    <variation>R</variation>
    <location>
        <position position="12"/>
    </location>
</feature>
<feature type="mutagenesis site" description="Mimics acetylation, leading to impaired rRNA processing; when associated with Q-12." evidence="7">
    <original>K</original>
    <variation>Q</variation>
    <location>
        <position position="25"/>
    </location>
</feature>
<feature type="mutagenesis site" description="Impaired acetylation, leading to promote rRNA processing; when associated with R-12." evidence="7">
    <original>K</original>
    <variation>R</variation>
    <location>
        <position position="25"/>
    </location>
</feature>
<feature type="turn" evidence="22">
    <location>
        <begin position="136"/>
        <end position="138"/>
    </location>
</feature>
<feature type="strand" evidence="21">
    <location>
        <begin position="140"/>
        <end position="143"/>
    </location>
</feature>
<feature type="strand" evidence="21">
    <location>
        <begin position="149"/>
        <end position="154"/>
    </location>
</feature>
<feature type="strand" evidence="21">
    <location>
        <begin position="158"/>
        <end position="165"/>
    </location>
</feature>
<feature type="strand" evidence="21">
    <location>
        <begin position="170"/>
        <end position="174"/>
    </location>
</feature>
<feature type="turn" evidence="21">
    <location>
        <begin position="175"/>
        <end position="177"/>
    </location>
</feature>
<feature type="strand" evidence="21">
    <location>
        <begin position="180"/>
        <end position="184"/>
    </location>
</feature>
<feature type="strand" evidence="21">
    <location>
        <begin position="202"/>
        <end position="207"/>
    </location>
</feature>
<feature type="strand" evidence="21">
    <location>
        <begin position="213"/>
        <end position="218"/>
    </location>
</feature>
<feature type="strand" evidence="21">
    <location>
        <begin position="223"/>
        <end position="227"/>
    </location>
</feature>
<feature type="turn" evidence="21">
    <location>
        <begin position="228"/>
        <end position="231"/>
    </location>
</feature>
<feature type="strand" evidence="21">
    <location>
        <begin position="232"/>
        <end position="237"/>
    </location>
</feature>
<feature type="strand" evidence="21">
    <location>
        <begin position="244"/>
        <end position="249"/>
    </location>
</feature>
<feature type="strand" evidence="21">
    <location>
        <begin position="253"/>
        <end position="260"/>
    </location>
</feature>
<feature type="strand" evidence="21">
    <location>
        <begin position="263"/>
        <end position="269"/>
    </location>
</feature>
<feature type="helix" evidence="21">
    <location>
        <begin position="270"/>
        <end position="272"/>
    </location>
</feature>
<feature type="strand" evidence="21">
    <location>
        <begin position="274"/>
        <end position="280"/>
    </location>
</feature>
<feature type="strand" evidence="21">
    <location>
        <begin position="288"/>
        <end position="291"/>
    </location>
</feature>
<feature type="strand" evidence="21">
    <location>
        <begin position="293"/>
        <end position="300"/>
    </location>
</feature>
<feature type="strand" evidence="21">
    <location>
        <begin position="306"/>
        <end position="311"/>
    </location>
</feature>
<feature type="turn" evidence="21">
    <location>
        <begin position="312"/>
        <end position="315"/>
    </location>
</feature>
<feature type="strand" evidence="21">
    <location>
        <begin position="316"/>
        <end position="321"/>
    </location>
</feature>
<feature type="strand" evidence="21">
    <location>
        <begin position="323"/>
        <end position="325"/>
    </location>
</feature>
<feature type="strand" evidence="21">
    <location>
        <begin position="327"/>
        <end position="334"/>
    </location>
</feature>
<feature type="strand" evidence="21">
    <location>
        <begin position="337"/>
        <end position="342"/>
    </location>
</feature>
<feature type="strand" evidence="21">
    <location>
        <begin position="347"/>
        <end position="353"/>
    </location>
</feature>
<feature type="strand" evidence="21">
    <location>
        <begin position="358"/>
        <end position="361"/>
    </location>
</feature>
<feature type="turn" evidence="21">
    <location>
        <begin position="362"/>
        <end position="365"/>
    </location>
</feature>
<feature type="strand" evidence="21">
    <location>
        <begin position="367"/>
        <end position="370"/>
    </location>
</feature>
<feature type="strand" evidence="21">
    <location>
        <begin position="381"/>
        <end position="384"/>
    </location>
</feature>
<feature type="strand" evidence="21">
    <location>
        <begin position="388"/>
        <end position="394"/>
    </location>
</feature>
<feature type="strand" evidence="21">
    <location>
        <begin position="396"/>
        <end position="405"/>
    </location>
</feature>
<feature type="helix" evidence="21">
    <location>
        <begin position="407"/>
        <end position="409"/>
    </location>
</feature>
<feature type="strand" evidence="21">
    <location>
        <begin position="412"/>
        <end position="419"/>
    </location>
</feature>
<feature type="strand" evidence="21">
    <location>
        <begin position="422"/>
        <end position="429"/>
    </location>
</feature>
<feature type="strand" evidence="21">
    <location>
        <begin position="431"/>
        <end position="443"/>
    </location>
</feature>
<feature type="strand" evidence="21">
    <location>
        <begin position="458"/>
        <end position="463"/>
    </location>
</feature>
<comment type="function">
    <text evidence="7 8">Component of a nucleolar small nuclear ribonucleoprotein particle (snoRNP) thought to participate in the processing and modification of pre-ribosomal RNA (pre-rRNA) (PubMed:26867678). Part of the small subunit (SSU) processome, first precursor of the small eukaryotic ribosomal subunit. During the assembly of the SSU processome in the nucleolus, many ribosome biogenesis factors, an RNA chaperone and ribosomal proteins associate with the nascent pre-rRNA and work in concert to generate RNA folding, modifications, rearrangements and cleavage as well as targeted degradation of pre-ribosomal RNA by the RNA exosome (PubMed:34516797).</text>
</comment>
<comment type="subunit">
    <text evidence="3 4 8">Interacts specifically with the U3 small nucleolar RNA (U3 snoRNA) (PubMed:10982864, PubMed:12381732). Binds a sub-fragment of the U3 snoRNA surrounding the B/C motif (3UBC) (PubMed:10982864, PubMed:12381732). This association with the U3BC RNA is dependent on the binding of a protein called 15.5K to the box B/C motif (PubMed:10982864, PubMed:12381732). The association of the protein with the U3BC RNA was found to be also dependent on a conserved RNA structure that flanks the box B/C motif (PubMed:10982864, PubMed:12381732). Part of the small subunit (SSU) processome, composed of more than 70 proteins and the RNA chaperone small nucleolar RNA (snoRNA) U3 (PubMed:34516797).</text>
</comment>
<comment type="interaction">
    <interactant intactId="EBI-2115327">
        <id>O43818</id>
    </interactant>
    <interactant intactId="EBI-396034">
        <id>O00567</id>
        <label>NOP56</label>
    </interactant>
    <organismsDiffer>false</organismsDiffer>
    <experiments>2</experiments>
</comment>
<comment type="subcellular location">
    <subcellularLocation>
        <location evidence="5 7 8 9">Nucleus</location>
        <location evidence="5 7 8 9">Nucleolus</location>
    </subcellularLocation>
</comment>
<comment type="domain">
    <text evidence="3">The WD domains are required for nucleolar localization and U3 small nucleolar RNAs binding.</text>
</comment>
<comment type="PTM">
    <text evidence="7">Acetylation at Lys-12 and Lys-25 by KAT2B/PCAF under stress impairs pre-rRNA processing (PubMed:26867678). Deacetylation by SIRT7 enhances RRP9-binding to U3 snoRNA, which is a prerequisite for pre-rRNA processing (PubMed:26867678).</text>
</comment>
<comment type="similarity">
    <text evidence="11">Belongs to the WD repeat RRP9 family.</text>
</comment>
<keyword id="KW-0002">3D-structure</keyword>
<keyword id="KW-0007">Acetylation</keyword>
<keyword id="KW-0903">Direct protein sequencing</keyword>
<keyword id="KW-1017">Isopeptide bond</keyword>
<keyword id="KW-0488">Methylation</keyword>
<keyword id="KW-0539">Nucleus</keyword>
<keyword id="KW-0597">Phosphoprotein</keyword>
<keyword id="KW-1267">Proteomics identification</keyword>
<keyword id="KW-1185">Reference proteome</keyword>
<keyword id="KW-0677">Repeat</keyword>
<keyword id="KW-0687">Ribonucleoprotein</keyword>
<keyword id="KW-0694">RNA-binding</keyword>
<keyword id="KW-0698">rRNA processing</keyword>
<keyword id="KW-0832">Ubl conjugation</keyword>
<keyword id="KW-0853">WD repeat</keyword>
<gene>
    <name evidence="12" type="primary">RRP9</name>
    <name type="synonym">RNU3IP2</name>
    <name evidence="10" type="synonym">U355K</name>
</gene>
<name>U3IP2_HUMAN</name>
<sequence>MSATAAARKRGKPASGAGAGAGAGKRRRKADSAGDRGKSKGGGKMNEEISSDSESESLAPRKPEEEEEEELEETAQEKKLRLAKLYLEQLRQQEEEKAEARAFEEDQVAGRLKEDVLEQRGRLQKLVAKEIQAPASADIRVLRGHQLSITCLVVTPDDSAIFSAAKDCSIIKWSVESGRKLHVIPRAKKGAEGKPPGHSSHVLCMAISSDGKYLASGDRSKLILIWEAQSCQHLYTFTGHRDAVSGLAFRRGTHQLYSTSHDRSVKVWNVAENSYVETLFGHQDAVAALDALSRECCVTAGGRDGTVRVWKIPEESQLVFYGHQGSIDCIHLINEEHMVSGADDGSVALWGLSKKRPLALQREAHGLRGEPGLEQPFWISSVAALLNTDLVATGSHSSCVRLWQCGEGFRQLDLLCDIPLVGFINSLKFSSSGDFLVAGVGQEHRLGRWWRIKEARNSVCIIPLRRVPVPPAAGS</sequence>
<organism>
    <name type="scientific">Homo sapiens</name>
    <name type="common">Human</name>
    <dbReference type="NCBI Taxonomy" id="9606"/>
    <lineage>
        <taxon>Eukaryota</taxon>
        <taxon>Metazoa</taxon>
        <taxon>Chordata</taxon>
        <taxon>Craniata</taxon>
        <taxon>Vertebrata</taxon>
        <taxon>Euteleostomi</taxon>
        <taxon>Mammalia</taxon>
        <taxon>Eutheria</taxon>
        <taxon>Euarchontoglires</taxon>
        <taxon>Primates</taxon>
        <taxon>Haplorrhini</taxon>
        <taxon>Catarrhini</taxon>
        <taxon>Hominidae</taxon>
        <taxon>Homo</taxon>
    </lineage>
</organism>
<evidence type="ECO:0000255" key="1"/>
<evidence type="ECO:0000256" key="2">
    <source>
        <dbReference type="SAM" id="MobiDB-lite"/>
    </source>
</evidence>
<evidence type="ECO:0000269" key="3">
    <source>
    </source>
</evidence>
<evidence type="ECO:0000269" key="4">
    <source>
    </source>
</evidence>
<evidence type="ECO:0000269" key="5">
    <source>
    </source>
</evidence>
<evidence type="ECO:0000269" key="6">
    <source>
    </source>
</evidence>
<evidence type="ECO:0000269" key="7">
    <source>
    </source>
</evidence>
<evidence type="ECO:0000269" key="8">
    <source>
    </source>
</evidence>
<evidence type="ECO:0000269" key="9">
    <source>
    </source>
</evidence>
<evidence type="ECO:0000303" key="10">
    <source>
    </source>
</evidence>
<evidence type="ECO:0000305" key="11"/>
<evidence type="ECO:0000312" key="12">
    <source>
        <dbReference type="HGNC" id="HGNC:16829"/>
    </source>
</evidence>
<evidence type="ECO:0007744" key="13">
    <source>
        <dbReference type="PDB" id="7MQ8"/>
    </source>
</evidence>
<evidence type="ECO:0007744" key="14">
    <source>
        <dbReference type="PDB" id="7MQ9"/>
    </source>
</evidence>
<evidence type="ECO:0007744" key="15">
    <source>
        <dbReference type="PDB" id="7MQA"/>
    </source>
</evidence>
<evidence type="ECO:0007744" key="16">
    <source>
    </source>
</evidence>
<evidence type="ECO:0007744" key="17">
    <source>
    </source>
</evidence>
<evidence type="ECO:0007744" key="18">
    <source>
    </source>
</evidence>
<evidence type="ECO:0007744" key="19">
    <source>
    </source>
</evidence>
<evidence type="ECO:0007744" key="20">
    <source>
    </source>
</evidence>
<evidence type="ECO:0007829" key="21">
    <source>
        <dbReference type="PDB" id="4J0W"/>
    </source>
</evidence>
<evidence type="ECO:0007829" key="22">
    <source>
        <dbReference type="PDB" id="4JXM"/>
    </source>
</evidence>
<proteinExistence type="evidence at protein level"/>
<dbReference type="EMBL" id="AJ001340">
    <property type="protein sequence ID" value="CAA04687.1"/>
    <property type="molecule type" value="mRNA"/>
</dbReference>
<dbReference type="EMBL" id="AK313696">
    <property type="protein sequence ID" value="BAG36443.1"/>
    <property type="molecule type" value="mRNA"/>
</dbReference>
<dbReference type="EMBL" id="CH471055">
    <property type="protein sequence ID" value="EAW65159.1"/>
    <property type="molecule type" value="Genomic_DNA"/>
</dbReference>
<dbReference type="EMBL" id="BC001113">
    <property type="protein sequence ID" value="AAH01113.1"/>
    <property type="molecule type" value="mRNA"/>
</dbReference>
<dbReference type="EMBL" id="BC009879">
    <property type="protein sequence ID" value="AAH09879.1"/>
    <property type="molecule type" value="mRNA"/>
</dbReference>
<dbReference type="EMBL" id="BC010048">
    <property type="protein sequence ID" value="AAH10048.1"/>
    <property type="molecule type" value="mRNA"/>
</dbReference>
<dbReference type="EMBL" id="BC023662">
    <property type="protein sequence ID" value="AAH23662.2"/>
    <property type="molecule type" value="mRNA"/>
</dbReference>
<dbReference type="CCDS" id="CCDS2837.1"/>
<dbReference type="RefSeq" id="NP_004695.1">
    <property type="nucleotide sequence ID" value="NM_004704.5"/>
</dbReference>
<dbReference type="PDB" id="4J0W">
    <property type="method" value="X-ray"/>
    <property type="resolution" value="1.70 A"/>
    <property type="chains" value="A=137-475"/>
</dbReference>
<dbReference type="PDB" id="4JXM">
    <property type="method" value="X-ray"/>
    <property type="resolution" value="1.92 A"/>
    <property type="chains" value="A=118-470"/>
</dbReference>
<dbReference type="PDB" id="7MQ8">
    <property type="method" value="EM"/>
    <property type="resolution" value="3.60 A"/>
    <property type="chains" value="SG=1-475"/>
</dbReference>
<dbReference type="PDB" id="7MQ9">
    <property type="method" value="EM"/>
    <property type="resolution" value="3.87 A"/>
    <property type="chains" value="SG=1-475"/>
</dbReference>
<dbReference type="PDB" id="7MQA">
    <property type="method" value="EM"/>
    <property type="resolution" value="2.70 A"/>
    <property type="chains" value="SG=1-475"/>
</dbReference>
<dbReference type="PDBsum" id="4J0W"/>
<dbReference type="PDBsum" id="4JXM"/>
<dbReference type="PDBsum" id="7MQ8"/>
<dbReference type="PDBsum" id="7MQ9"/>
<dbReference type="PDBsum" id="7MQA"/>
<dbReference type="EMDB" id="EMD-23936"/>
<dbReference type="EMDB" id="EMD-23937"/>
<dbReference type="EMDB" id="EMD-23938"/>
<dbReference type="SMR" id="O43818"/>
<dbReference type="BioGRID" id="114584">
    <property type="interactions" value="141"/>
</dbReference>
<dbReference type="ComplexPortal" id="CPX-2511">
    <property type="entry name" value="Small ribosomal subunit processome"/>
</dbReference>
<dbReference type="FunCoup" id="O43818">
    <property type="interactions" value="2203"/>
</dbReference>
<dbReference type="IntAct" id="O43818">
    <property type="interactions" value="61"/>
</dbReference>
<dbReference type="MINT" id="O43818"/>
<dbReference type="STRING" id="9606.ENSP00000232888"/>
<dbReference type="GlyGen" id="O43818">
    <property type="glycosylation" value="1 site, 1 O-linked glycan (1 site)"/>
</dbReference>
<dbReference type="iPTMnet" id="O43818"/>
<dbReference type="PhosphoSitePlus" id="O43818"/>
<dbReference type="SwissPalm" id="O43818"/>
<dbReference type="BioMuta" id="RRP9"/>
<dbReference type="jPOST" id="O43818"/>
<dbReference type="MassIVE" id="O43818"/>
<dbReference type="PaxDb" id="9606-ENSP00000232888"/>
<dbReference type="PeptideAtlas" id="O43818"/>
<dbReference type="ProteomicsDB" id="49181"/>
<dbReference type="Pumba" id="O43818"/>
<dbReference type="Antibodypedia" id="14210">
    <property type="antibodies" value="83 antibodies from 22 providers"/>
</dbReference>
<dbReference type="DNASU" id="9136"/>
<dbReference type="Ensembl" id="ENST00000232888.7">
    <property type="protein sequence ID" value="ENSP00000232888.6"/>
    <property type="gene ID" value="ENSG00000114767.7"/>
</dbReference>
<dbReference type="GeneID" id="9136"/>
<dbReference type="KEGG" id="hsa:9136"/>
<dbReference type="MANE-Select" id="ENST00000232888.7">
    <property type="protein sequence ID" value="ENSP00000232888.6"/>
    <property type="RefSeq nucleotide sequence ID" value="NM_004704.5"/>
    <property type="RefSeq protein sequence ID" value="NP_004695.1"/>
</dbReference>
<dbReference type="UCSC" id="uc003dbw.3">
    <property type="organism name" value="human"/>
</dbReference>
<dbReference type="AGR" id="HGNC:16829"/>
<dbReference type="CTD" id="9136"/>
<dbReference type="DisGeNET" id="9136"/>
<dbReference type="GeneCards" id="RRP9"/>
<dbReference type="HGNC" id="HGNC:16829">
    <property type="gene designation" value="RRP9"/>
</dbReference>
<dbReference type="HPA" id="ENSG00000114767">
    <property type="expression patterns" value="Low tissue specificity"/>
</dbReference>
<dbReference type="MIM" id="620013">
    <property type="type" value="gene"/>
</dbReference>
<dbReference type="neXtProt" id="NX_O43818"/>
<dbReference type="OpenTargets" id="ENSG00000114767"/>
<dbReference type="PharmGKB" id="PA162402176"/>
<dbReference type="VEuPathDB" id="HostDB:ENSG00000114767"/>
<dbReference type="eggNOG" id="KOG0299">
    <property type="taxonomic scope" value="Eukaryota"/>
</dbReference>
<dbReference type="GeneTree" id="ENSGT00940000158328"/>
<dbReference type="HOGENOM" id="CLU_014017_1_1_1"/>
<dbReference type="InParanoid" id="O43818"/>
<dbReference type="OMA" id="CSLRIWK"/>
<dbReference type="OrthoDB" id="189968at2759"/>
<dbReference type="PAN-GO" id="O43818">
    <property type="GO annotations" value="2 GO annotations based on evolutionary models"/>
</dbReference>
<dbReference type="PhylomeDB" id="O43818"/>
<dbReference type="TreeFam" id="TF105828"/>
<dbReference type="PathwayCommons" id="O43818"/>
<dbReference type="Reactome" id="R-HSA-6790901">
    <property type="pathway name" value="rRNA modification in the nucleus and cytosol"/>
</dbReference>
<dbReference type="Reactome" id="R-HSA-6791226">
    <property type="pathway name" value="Major pathway of rRNA processing in the nucleolus and cytosol"/>
</dbReference>
<dbReference type="SignaLink" id="O43818"/>
<dbReference type="BioGRID-ORCS" id="9136">
    <property type="hits" value="654 hits in 1165 CRISPR screens"/>
</dbReference>
<dbReference type="CD-CODE" id="91857CE7">
    <property type="entry name" value="Nucleolus"/>
</dbReference>
<dbReference type="ChiTaRS" id="RRP9">
    <property type="organism name" value="human"/>
</dbReference>
<dbReference type="EvolutionaryTrace" id="O43818"/>
<dbReference type="GeneWiki" id="RRP9"/>
<dbReference type="GenomeRNAi" id="9136"/>
<dbReference type="Pharos" id="O43818">
    <property type="development level" value="Tbio"/>
</dbReference>
<dbReference type="PRO" id="PR:O43818"/>
<dbReference type="Proteomes" id="UP000005640">
    <property type="component" value="Chromosome 3"/>
</dbReference>
<dbReference type="RNAct" id="O43818">
    <property type="molecule type" value="protein"/>
</dbReference>
<dbReference type="Bgee" id="ENSG00000114767">
    <property type="expression patterns" value="Expressed in gastrocnemius and 103 other cell types or tissues"/>
</dbReference>
<dbReference type="GO" id="GO:0031428">
    <property type="term" value="C:box C/D methylation guide snoRNP complex"/>
    <property type="evidence" value="ECO:0000314"/>
    <property type="project" value="UniProtKB"/>
</dbReference>
<dbReference type="GO" id="GO:0005730">
    <property type="term" value="C:nucleolus"/>
    <property type="evidence" value="ECO:0000314"/>
    <property type="project" value="UniProtKB"/>
</dbReference>
<dbReference type="GO" id="GO:0005654">
    <property type="term" value="C:nucleoplasm"/>
    <property type="evidence" value="ECO:0000304"/>
    <property type="project" value="Reactome"/>
</dbReference>
<dbReference type="GO" id="GO:0032040">
    <property type="term" value="C:small-subunit processome"/>
    <property type="evidence" value="ECO:0000314"/>
    <property type="project" value="UniProtKB"/>
</dbReference>
<dbReference type="GO" id="GO:0003723">
    <property type="term" value="F:RNA binding"/>
    <property type="evidence" value="ECO:0007005"/>
    <property type="project" value="UniProtKB"/>
</dbReference>
<dbReference type="GO" id="GO:0030515">
    <property type="term" value="F:snoRNA binding"/>
    <property type="evidence" value="ECO:0000318"/>
    <property type="project" value="GO_Central"/>
</dbReference>
<dbReference type="GO" id="GO:0034511">
    <property type="term" value="F:U3 snoRNA binding"/>
    <property type="evidence" value="ECO:0000314"/>
    <property type="project" value="UniProtKB"/>
</dbReference>
<dbReference type="GO" id="GO:0042274">
    <property type="term" value="P:ribosomal small subunit biogenesis"/>
    <property type="evidence" value="ECO:0000314"/>
    <property type="project" value="UniProtKB"/>
</dbReference>
<dbReference type="GO" id="GO:0006364">
    <property type="term" value="P:rRNA processing"/>
    <property type="evidence" value="ECO:0000314"/>
    <property type="project" value="UniProtKB"/>
</dbReference>
<dbReference type="CDD" id="cd00200">
    <property type="entry name" value="WD40"/>
    <property type="match status" value="1"/>
</dbReference>
<dbReference type="FunFam" id="2.130.10.10:FF:000143">
    <property type="entry name" value="U3 small nucleolar RNA-interacting protein 2 isoform X2"/>
    <property type="match status" value="1"/>
</dbReference>
<dbReference type="Gene3D" id="2.130.10.10">
    <property type="entry name" value="YVTN repeat-like/Quinoprotein amine dehydrogenase"/>
    <property type="match status" value="1"/>
</dbReference>
<dbReference type="InterPro" id="IPR020472">
    <property type="entry name" value="G-protein_beta_WD-40_rep"/>
</dbReference>
<dbReference type="InterPro" id="IPR039241">
    <property type="entry name" value="Rrp9-like"/>
</dbReference>
<dbReference type="InterPro" id="IPR015943">
    <property type="entry name" value="WD40/YVTN_repeat-like_dom_sf"/>
</dbReference>
<dbReference type="InterPro" id="IPR019775">
    <property type="entry name" value="WD40_repeat_CS"/>
</dbReference>
<dbReference type="InterPro" id="IPR036322">
    <property type="entry name" value="WD40_repeat_dom_sf"/>
</dbReference>
<dbReference type="InterPro" id="IPR001680">
    <property type="entry name" value="WD40_rpt"/>
</dbReference>
<dbReference type="PANTHER" id="PTHR19865">
    <property type="entry name" value="U3 SMALL NUCLEOLAR RNA INTERACTING PROTEIN 2"/>
    <property type="match status" value="1"/>
</dbReference>
<dbReference type="PANTHER" id="PTHR19865:SF0">
    <property type="entry name" value="U3 SMALL NUCLEOLAR RNA-INTERACTING PROTEIN 2"/>
    <property type="match status" value="1"/>
</dbReference>
<dbReference type="Pfam" id="PF00400">
    <property type="entry name" value="WD40"/>
    <property type="match status" value="5"/>
</dbReference>
<dbReference type="PRINTS" id="PR00320">
    <property type="entry name" value="GPROTEINBRPT"/>
</dbReference>
<dbReference type="SMART" id="SM00320">
    <property type="entry name" value="WD40"/>
    <property type="match status" value="6"/>
</dbReference>
<dbReference type="SUPFAM" id="SSF50978">
    <property type="entry name" value="WD40 repeat-like"/>
    <property type="match status" value="1"/>
</dbReference>
<dbReference type="PROSITE" id="PS00678">
    <property type="entry name" value="WD_REPEATS_1"/>
    <property type="match status" value="1"/>
</dbReference>
<dbReference type="PROSITE" id="PS50082">
    <property type="entry name" value="WD_REPEATS_2"/>
    <property type="match status" value="5"/>
</dbReference>
<dbReference type="PROSITE" id="PS50294">
    <property type="entry name" value="WD_REPEATS_REGION"/>
    <property type="match status" value="1"/>
</dbReference>
<reference key="1">
    <citation type="journal article" date="1998" name="Mol. Cell. Biol.">
        <title>cDNA cloning and characterization of the human U3 small nucleolar ribonucleoprotein complex-associated 55-kilodalton protein.</title>
        <authorList>
            <person name="Pluk H."/>
            <person name="Soffner J."/>
            <person name="Luehrmann R."/>
            <person name="van Venrooij W.J."/>
        </authorList>
    </citation>
    <scope>NUCLEOTIDE SEQUENCE [MRNA]</scope>
    <scope>PROTEIN SEQUENCE OF 102-113 AND 267-273</scope>
    <scope>SUBCELLULAR LOCATION</scope>
    <source>
        <tissue>Teratocarcinoma</tissue>
    </source>
</reference>
<reference key="2">
    <citation type="journal article" date="2004" name="Nat. Genet.">
        <title>Complete sequencing and characterization of 21,243 full-length human cDNAs.</title>
        <authorList>
            <person name="Ota T."/>
            <person name="Suzuki Y."/>
            <person name="Nishikawa T."/>
            <person name="Otsuki T."/>
            <person name="Sugiyama T."/>
            <person name="Irie R."/>
            <person name="Wakamatsu A."/>
            <person name="Hayashi K."/>
            <person name="Sato H."/>
            <person name="Nagai K."/>
            <person name="Kimura K."/>
            <person name="Makita H."/>
            <person name="Sekine M."/>
            <person name="Obayashi M."/>
            <person name="Nishi T."/>
            <person name="Shibahara T."/>
            <person name="Tanaka T."/>
            <person name="Ishii S."/>
            <person name="Yamamoto J."/>
            <person name="Saito K."/>
            <person name="Kawai Y."/>
            <person name="Isono Y."/>
            <person name="Nakamura Y."/>
            <person name="Nagahari K."/>
            <person name="Murakami K."/>
            <person name="Yasuda T."/>
            <person name="Iwayanagi T."/>
            <person name="Wagatsuma M."/>
            <person name="Shiratori A."/>
            <person name="Sudo H."/>
            <person name="Hosoiri T."/>
            <person name="Kaku Y."/>
            <person name="Kodaira H."/>
            <person name="Kondo H."/>
            <person name="Sugawara M."/>
            <person name="Takahashi M."/>
            <person name="Kanda K."/>
            <person name="Yokoi T."/>
            <person name="Furuya T."/>
            <person name="Kikkawa E."/>
            <person name="Omura Y."/>
            <person name="Abe K."/>
            <person name="Kamihara K."/>
            <person name="Katsuta N."/>
            <person name="Sato K."/>
            <person name="Tanikawa M."/>
            <person name="Yamazaki M."/>
            <person name="Ninomiya K."/>
            <person name="Ishibashi T."/>
            <person name="Yamashita H."/>
            <person name="Murakawa K."/>
            <person name="Fujimori K."/>
            <person name="Tanai H."/>
            <person name="Kimata M."/>
            <person name="Watanabe M."/>
            <person name="Hiraoka S."/>
            <person name="Chiba Y."/>
            <person name="Ishida S."/>
            <person name="Ono Y."/>
            <person name="Takiguchi S."/>
            <person name="Watanabe S."/>
            <person name="Yosida M."/>
            <person name="Hotuta T."/>
            <person name="Kusano J."/>
            <person name="Kanehori K."/>
            <person name="Takahashi-Fujii A."/>
            <person name="Hara H."/>
            <person name="Tanase T.-O."/>
            <person name="Nomura Y."/>
            <person name="Togiya S."/>
            <person name="Komai F."/>
            <person name="Hara R."/>
            <person name="Takeuchi K."/>
            <person name="Arita M."/>
            <person name="Imose N."/>
            <person name="Musashino K."/>
            <person name="Yuuki H."/>
            <person name="Oshima A."/>
            <person name="Sasaki N."/>
            <person name="Aotsuka S."/>
            <person name="Yoshikawa Y."/>
            <person name="Matsunawa H."/>
            <person name="Ichihara T."/>
            <person name="Shiohata N."/>
            <person name="Sano S."/>
            <person name="Moriya S."/>
            <person name="Momiyama H."/>
            <person name="Satoh N."/>
            <person name="Takami S."/>
            <person name="Terashima Y."/>
            <person name="Suzuki O."/>
            <person name="Nakagawa S."/>
            <person name="Senoh A."/>
            <person name="Mizoguchi H."/>
            <person name="Goto Y."/>
            <person name="Shimizu F."/>
            <person name="Wakebe H."/>
            <person name="Hishigaki H."/>
            <person name="Watanabe T."/>
            <person name="Sugiyama A."/>
            <person name="Takemoto M."/>
            <person name="Kawakami B."/>
            <person name="Yamazaki M."/>
            <person name="Watanabe K."/>
            <person name="Kumagai A."/>
            <person name="Itakura S."/>
            <person name="Fukuzumi Y."/>
            <person name="Fujimori Y."/>
            <person name="Komiyama M."/>
            <person name="Tashiro H."/>
            <person name="Tanigami A."/>
            <person name="Fujiwara T."/>
            <person name="Ono T."/>
            <person name="Yamada K."/>
            <person name="Fujii Y."/>
            <person name="Ozaki K."/>
            <person name="Hirao M."/>
            <person name="Ohmori Y."/>
            <person name="Kawabata A."/>
            <person name="Hikiji T."/>
            <person name="Kobatake N."/>
            <person name="Inagaki H."/>
            <person name="Ikema Y."/>
            <person name="Okamoto S."/>
            <person name="Okitani R."/>
            <person name="Kawakami T."/>
            <person name="Noguchi S."/>
            <person name="Itoh T."/>
            <person name="Shigeta K."/>
            <person name="Senba T."/>
            <person name="Matsumura K."/>
            <person name="Nakajima Y."/>
            <person name="Mizuno T."/>
            <person name="Morinaga M."/>
            <person name="Sasaki M."/>
            <person name="Togashi T."/>
            <person name="Oyama M."/>
            <person name="Hata H."/>
            <person name="Watanabe M."/>
            <person name="Komatsu T."/>
            <person name="Mizushima-Sugano J."/>
            <person name="Satoh T."/>
            <person name="Shirai Y."/>
            <person name="Takahashi Y."/>
            <person name="Nakagawa K."/>
            <person name="Okumura K."/>
            <person name="Nagase T."/>
            <person name="Nomura N."/>
            <person name="Kikuchi H."/>
            <person name="Masuho Y."/>
            <person name="Yamashita R."/>
            <person name="Nakai K."/>
            <person name="Yada T."/>
            <person name="Nakamura Y."/>
            <person name="Ohara O."/>
            <person name="Isogai T."/>
            <person name="Sugano S."/>
        </authorList>
    </citation>
    <scope>NUCLEOTIDE SEQUENCE [LARGE SCALE MRNA]</scope>
</reference>
<reference key="3">
    <citation type="submission" date="2005-07" db="EMBL/GenBank/DDBJ databases">
        <authorList>
            <person name="Mural R.J."/>
            <person name="Istrail S."/>
            <person name="Sutton G.G."/>
            <person name="Florea L."/>
            <person name="Halpern A.L."/>
            <person name="Mobarry C.M."/>
            <person name="Lippert R."/>
            <person name="Walenz B."/>
            <person name="Shatkay H."/>
            <person name="Dew I."/>
            <person name="Miller J.R."/>
            <person name="Flanigan M.J."/>
            <person name="Edwards N.J."/>
            <person name="Bolanos R."/>
            <person name="Fasulo D."/>
            <person name="Halldorsson B.V."/>
            <person name="Hannenhalli S."/>
            <person name="Turner R."/>
            <person name="Yooseph S."/>
            <person name="Lu F."/>
            <person name="Nusskern D.R."/>
            <person name="Shue B.C."/>
            <person name="Zheng X.H."/>
            <person name="Zhong F."/>
            <person name="Delcher A.L."/>
            <person name="Huson D.H."/>
            <person name="Kravitz S.A."/>
            <person name="Mouchard L."/>
            <person name="Reinert K."/>
            <person name="Remington K.A."/>
            <person name="Clark A.G."/>
            <person name="Waterman M.S."/>
            <person name="Eichler E.E."/>
            <person name="Adams M.D."/>
            <person name="Hunkapiller M.W."/>
            <person name="Myers E.W."/>
            <person name="Venter J.C."/>
        </authorList>
    </citation>
    <scope>NUCLEOTIDE SEQUENCE [LARGE SCALE GENOMIC DNA]</scope>
</reference>
<reference key="4">
    <citation type="journal article" date="2004" name="Genome Res.">
        <title>The status, quality, and expansion of the NIH full-length cDNA project: the Mammalian Gene Collection (MGC).</title>
        <authorList>
            <consortium name="The MGC Project Team"/>
        </authorList>
    </citation>
    <scope>NUCLEOTIDE SEQUENCE [LARGE SCALE MRNA]</scope>
    <source>
        <tissue>Brain</tissue>
        <tissue>Skin</tissue>
    </source>
</reference>
<reference key="5">
    <citation type="journal article" date="2000" name="Nucleic Acids Res.">
        <title>Interaction of the U3-55k protein with U3 snoRNA is mediated by the box B/C motif of U3 and the WD repeats of U3-55k.</title>
        <authorList>
            <person name="Lukowiak A.A."/>
            <person name="Granneman S."/>
            <person name="Mattox S.A."/>
            <person name="Speckmann W.A."/>
            <person name="Jones K."/>
            <person name="Pluk H."/>
            <person name="van Venrooij W.J."/>
            <person name="Terns R.M."/>
            <person name="Terns M.P."/>
        </authorList>
    </citation>
    <scope>INTERACTION WITH U3 SNRNA</scope>
    <scope>DOMAIN</scope>
</reference>
<reference key="6">
    <citation type="journal article" date="2002" name="J. Biol. Chem.">
        <title>The hU3-55K protein requires 15.5K binding to the box B/C motif as well as flanking RNA elements for its association with the U3 small nucleolar RNA in Vitro.</title>
        <authorList>
            <person name="Granneman S."/>
            <person name="Pruijn G.J.M."/>
            <person name="Horstman W."/>
            <person name="van Venrooij W.J."/>
            <person name="Luehrmann R."/>
            <person name="Watkins N.J."/>
        </authorList>
    </citation>
    <scope>INTERACTION WITH U3 SNRNA</scope>
</reference>
<reference key="7">
    <citation type="journal article" date="2002" name="Mol. Biol. Cell">
        <title>Functional proteomic analysis of human nucleolus.</title>
        <authorList>
            <person name="Scherl A."/>
            <person name="Coute Y."/>
            <person name="Deon C."/>
            <person name="Calle A."/>
            <person name="Kindbeiter K."/>
            <person name="Sanchez J.-C."/>
            <person name="Greco A."/>
            <person name="Hochstrasser D.F."/>
            <person name="Diaz J.-J."/>
        </authorList>
    </citation>
    <scope>SUBCELLULAR LOCATION [LARGE SCALE ANALYSIS]</scope>
    <source>
        <tissue>Cervix carcinoma</tissue>
    </source>
</reference>
<reference key="8">
    <citation type="journal article" date="2008" name="Proc. Natl. Acad. Sci. U.S.A.">
        <title>A quantitative atlas of mitotic phosphorylation.</title>
        <authorList>
            <person name="Dephoure N."/>
            <person name="Zhou C."/>
            <person name="Villen J."/>
            <person name="Beausoleil S.A."/>
            <person name="Bakalarski C.E."/>
            <person name="Elledge S.J."/>
            <person name="Gygi S.P."/>
        </authorList>
    </citation>
    <scope>PHOSPHORYLATION [LARGE SCALE ANALYSIS] AT SER-50; SER-51; SER-53 AND SER-57</scope>
    <scope>IDENTIFICATION BY MASS SPECTROMETRY [LARGE SCALE ANALYSIS]</scope>
    <source>
        <tissue>Cervix carcinoma</tissue>
    </source>
</reference>
<reference key="9">
    <citation type="journal article" date="2009" name="Sci. Signal.">
        <title>Quantitative phosphoproteomic analysis of T cell receptor signaling reveals system-wide modulation of protein-protein interactions.</title>
        <authorList>
            <person name="Mayya V."/>
            <person name="Lundgren D.H."/>
            <person name="Hwang S.-I."/>
            <person name="Rezaul K."/>
            <person name="Wu L."/>
            <person name="Eng J.K."/>
            <person name="Rodionov V."/>
            <person name="Han D.K."/>
        </authorList>
    </citation>
    <scope>PHOSPHORYLATION [LARGE SCALE ANALYSIS] AT SER-50; SER-51 AND SER-53</scope>
    <scope>IDENTIFICATION BY MASS SPECTROMETRY [LARGE SCALE ANALYSIS]</scope>
    <source>
        <tissue>Leukemic T-cell</tissue>
    </source>
</reference>
<reference key="10">
    <citation type="journal article" date="2011" name="Sci. Signal.">
        <title>System-wide temporal characterization of the proteome and phosphoproteome of human embryonic stem cell differentiation.</title>
        <authorList>
            <person name="Rigbolt K.T."/>
            <person name="Prokhorova T.A."/>
            <person name="Akimov V."/>
            <person name="Henningsen J."/>
            <person name="Johansen P.T."/>
            <person name="Kratchmarova I."/>
            <person name="Kassem M."/>
            <person name="Mann M."/>
            <person name="Olsen J.V."/>
            <person name="Blagoev B."/>
        </authorList>
    </citation>
    <scope>PHOSPHORYLATION [LARGE SCALE ANALYSIS] AT SER-50; SER-51 AND SER-53</scope>
    <scope>IDENTIFICATION BY MASS SPECTROMETRY [LARGE SCALE ANALYSIS]</scope>
</reference>
<reference key="11">
    <citation type="journal article" date="2014" name="Mol. Cell. Proteomics">
        <title>Immunoaffinity enrichment and mass spectrometry analysis of protein methylation.</title>
        <authorList>
            <person name="Guo A."/>
            <person name="Gu H."/>
            <person name="Zhou J."/>
            <person name="Mulhern D."/>
            <person name="Wang Y."/>
            <person name="Lee K.A."/>
            <person name="Yang V."/>
            <person name="Aguiar M."/>
            <person name="Kornhauser J."/>
            <person name="Jia X."/>
            <person name="Ren J."/>
            <person name="Beausoleil S.A."/>
            <person name="Silva J.C."/>
            <person name="Vemulapalli V."/>
            <person name="Bedford M.T."/>
            <person name="Comb M.J."/>
        </authorList>
    </citation>
    <scope>METHYLATION [LARGE SCALE ANALYSIS] AT ARG-10</scope>
    <scope>IDENTIFICATION BY MASS SPECTROMETRY [LARGE SCALE ANALYSIS]</scope>
    <source>
        <tissue>Colon carcinoma</tissue>
    </source>
</reference>
<reference key="12">
    <citation type="journal article" date="2017" name="Nat. Struct. Mol. Biol.">
        <title>Site-specific mapping of the human SUMO proteome reveals co-modification with phosphorylation.</title>
        <authorList>
            <person name="Hendriks I.A."/>
            <person name="Lyon D."/>
            <person name="Young C."/>
            <person name="Jensen L.J."/>
            <person name="Vertegaal A.C."/>
            <person name="Nielsen M.L."/>
        </authorList>
    </citation>
    <scope>SUMOYLATION [LARGE SCALE ANALYSIS] AT LYS-113</scope>
    <scope>IDENTIFICATION BY MASS SPECTROMETRY [LARGE SCALE ANALYSIS]</scope>
</reference>
<reference key="13">
    <citation type="journal article" date="2016" name="Nat. Commun.">
        <title>SIRT7-dependent deacetylation of the U3-55k protein controls pre-rRNA processing.</title>
        <authorList>
            <person name="Chen S."/>
            <person name="Blank M.F."/>
            <person name="Iyer A."/>
            <person name="Huang B."/>
            <person name="Wang L."/>
            <person name="Grummt I."/>
            <person name="Voit R."/>
        </authorList>
    </citation>
    <scope>FUNCTION</scope>
    <scope>SUBCELLULAR LOCATION</scope>
    <scope>ACETYLATION AT LYS-12 AND LYS-25</scope>
    <scope>DEACETYLATION BY SIRT7</scope>
    <scope>MUTAGENESIS OF LYS-12 AND LYS-25</scope>
</reference>
<reference key="14">
    <citation type="submission" date="2013-04" db="PDB data bank">
        <title>Crystal structure of RRP9 WD40 repeats.</title>
        <authorList>
            <consortium name="Structural genomics consortium (SGC)"/>
        </authorList>
    </citation>
    <scope>X-RAY CRYSTALLOGRAPHY (1.92 ANGSTROMS) OF 118-470</scope>
</reference>
<reference key="15">
    <citation type="journal article" date="2006" name="Science">
        <title>The consensus coding sequences of human breast and colorectal cancers.</title>
        <authorList>
            <person name="Sjoeblom T."/>
            <person name="Jones S."/>
            <person name="Wood L.D."/>
            <person name="Parsons D.W."/>
            <person name="Lin J."/>
            <person name="Barber T.D."/>
            <person name="Mandelker D."/>
            <person name="Leary R.J."/>
            <person name="Ptak J."/>
            <person name="Silliman N."/>
            <person name="Szabo S."/>
            <person name="Buckhaults P."/>
            <person name="Farrell C."/>
            <person name="Meeh P."/>
            <person name="Markowitz S.D."/>
            <person name="Willis J."/>
            <person name="Dawson D."/>
            <person name="Willson J.K.V."/>
            <person name="Gazdar A.F."/>
            <person name="Hartigan J."/>
            <person name="Wu L."/>
            <person name="Liu C."/>
            <person name="Parmigiani G."/>
            <person name="Park B.H."/>
            <person name="Bachman K.E."/>
            <person name="Papadopoulos N."/>
            <person name="Vogelstein B."/>
            <person name="Kinzler K.W."/>
            <person name="Velculescu V.E."/>
        </authorList>
    </citation>
    <scope>VARIANTS [LARGE SCALE ANALYSIS] GLY-8 AND GLU-342</scope>
</reference>
<reference evidence="13 14 15" key="16">
    <citation type="journal article" date="2021" name="Science">
        <title>Nucleolar maturation of the human small subunit processome.</title>
        <authorList>
            <person name="Singh S."/>
            <person name="Vanden Broeck A."/>
            <person name="Miller L."/>
            <person name="Chaker-Margot M."/>
            <person name="Klinge S."/>
        </authorList>
    </citation>
    <scope>STRUCTURE BY ELECTRON MICROSCOPY (2.70 ANGSTROMS)</scope>
    <scope>FUNCTION</scope>
    <scope>SUBUNIT</scope>
    <scope>SUBCELLULAR LOCATION</scope>
</reference>
<accession>O43818</accession>
<accession>B2R996</accession>
<accession>Q8IZ30</accession>